<sequence>MRYNQFSYIPTSLERAAEELKELGFDLDLQKTAKANLESFLRKLFFHYPDSVYPLSHLIAKNDMDALSFFQSEQELSKEVFDLLALQVLGFIPGVDFTEADAFLDKLAFPIHFDETEIIKHIHHLLATRCKSGMTLIDDLVSQGMLTMDNDYHFFNGKSLATFDTSQLIREVVYVEAPLDTDQDGQLDLIKVNIIRPQSQKPLPTLMTPSPYHQGINEVANDKKLYRMEKELVVKKRRQITVEDRDFIPLETQPCKLPIGQNLESFSYINSYSLNDYFLARGFANIYVSGVGTAGSTGFMTSGDYAQIESFKAVIDWLNGRATAYTSHSKTHQVRADWANGLVCTTGKSYLGTMSTGLATTGVDGLAMIIAESAISSWYNYYRENGLVCSPGGYPGEDLDVLTELTYSRNLLAGDYLRHNDRYQELLNQQSQALDRQSGDYNQFWHDRNYLKNAHQIKCDVVYTHGLQDWNVKPRQVYEIVNALPSTINKHLFLHQGEHVYMHNWQSIDFRESMNALLCQKLLGLANDFSLPEMIWQDNTCPQNWQERKVFGTSTIKELDLGQELLLIDNHYGEDEFKAYGKDFRAFKAALFKGKANQALVDILLEEDLLINGEIVLQLKVKSSENKGLLSAQILDYGKKKRLGDLPIALTQSSIDNGQNFSREPLKELPFRENSYRVISKGFMNLQNRNNLSSIETIPNNKWMTVRLPLQPTIYHLEKGDTLRVILYTTDFEHTVRDNSNYALTIDLSQSQLIVPIASN</sequence>
<feature type="chain" id="PRO_1000132345" description="Xaa-Pro dipeptidyl-peptidase">
    <location>
        <begin position="1"/>
        <end position="760"/>
    </location>
</feature>
<feature type="active site" description="Charge relay system" evidence="1">
    <location>
        <position position="349"/>
    </location>
</feature>
<feature type="active site" description="Charge relay system" evidence="1">
    <location>
        <position position="469"/>
    </location>
</feature>
<feature type="active site" description="Charge relay system" evidence="1">
    <location>
        <position position="499"/>
    </location>
</feature>
<gene>
    <name evidence="1" type="primary">pepX</name>
    <name type="ordered locus">Spy49_1451</name>
</gene>
<organism>
    <name type="scientific">Streptococcus pyogenes serotype M49 (strain NZ131)</name>
    <dbReference type="NCBI Taxonomy" id="471876"/>
    <lineage>
        <taxon>Bacteria</taxon>
        <taxon>Bacillati</taxon>
        <taxon>Bacillota</taxon>
        <taxon>Bacilli</taxon>
        <taxon>Lactobacillales</taxon>
        <taxon>Streptococcaceae</taxon>
        <taxon>Streptococcus</taxon>
    </lineage>
</organism>
<protein>
    <recommendedName>
        <fullName evidence="1">Xaa-Pro dipeptidyl-peptidase</fullName>
        <ecNumber evidence="1">3.4.14.11</ecNumber>
    </recommendedName>
    <alternativeName>
        <fullName evidence="1">X-Pro dipeptidyl-peptidase</fullName>
    </alternativeName>
    <alternativeName>
        <fullName evidence="1">X-prolyl-dipeptidyl aminopeptidase</fullName>
        <shortName evidence="1">X-PDAP</shortName>
    </alternativeName>
</protein>
<comment type="function">
    <text evidence="1">Removes N-terminal dipeptides sequentially from polypeptides having unsubstituted N-termini provided that the penultimate residue is proline.</text>
</comment>
<comment type="catalytic activity">
    <reaction evidence="1">
        <text>Hydrolyzes Xaa-Pro-|- bonds to release unblocked, N-terminal dipeptides from substrates including Ala-Pro-|-p-nitroanilide and (sequentially) Tyr-Pro-|-Phe-Pro-|-Gly-Pro-|-Ile.</text>
        <dbReference type="EC" id="3.4.14.11"/>
    </reaction>
</comment>
<comment type="subunit">
    <text evidence="1">Homodimer.</text>
</comment>
<comment type="subcellular location">
    <subcellularLocation>
        <location evidence="1">Cytoplasm</location>
    </subcellularLocation>
</comment>
<comment type="similarity">
    <text evidence="1">Belongs to the peptidase S15 family.</text>
</comment>
<name>PEPX_STRPZ</name>
<keyword id="KW-0031">Aminopeptidase</keyword>
<keyword id="KW-0963">Cytoplasm</keyword>
<keyword id="KW-0378">Hydrolase</keyword>
<keyword id="KW-0645">Protease</keyword>
<keyword id="KW-0720">Serine protease</keyword>
<reference key="1">
    <citation type="journal article" date="2008" name="J. Bacteriol.">
        <title>Genome sequence of a nephritogenic and highly transformable M49 strain of Streptococcus pyogenes.</title>
        <authorList>
            <person name="McShan W.M."/>
            <person name="Ferretti J.J."/>
            <person name="Karasawa T."/>
            <person name="Suvorov A.N."/>
            <person name="Lin S."/>
            <person name="Qin B."/>
            <person name="Jia H."/>
            <person name="Kenton S."/>
            <person name="Najar F."/>
            <person name="Wu H."/>
            <person name="Scott J."/>
            <person name="Roe B.A."/>
            <person name="Savic D.J."/>
        </authorList>
    </citation>
    <scope>NUCLEOTIDE SEQUENCE [LARGE SCALE GENOMIC DNA]</scope>
    <source>
        <strain>NZ131</strain>
    </source>
</reference>
<proteinExistence type="inferred from homology"/>
<evidence type="ECO:0000255" key="1">
    <source>
        <dbReference type="HAMAP-Rule" id="MF_00698"/>
    </source>
</evidence>
<dbReference type="EC" id="3.4.14.11" evidence="1"/>
<dbReference type="EMBL" id="CP000829">
    <property type="protein sequence ID" value="ACI61723.1"/>
    <property type="molecule type" value="Genomic_DNA"/>
</dbReference>
<dbReference type="SMR" id="B5XI61"/>
<dbReference type="ESTHER" id="strpy-PEPXP">
    <property type="family name" value="Lactobacillus_peptidase"/>
</dbReference>
<dbReference type="KEGG" id="soz:Spy49_1451"/>
<dbReference type="HOGENOM" id="CLU_011800_0_0_9"/>
<dbReference type="Proteomes" id="UP000001039">
    <property type="component" value="Chromosome"/>
</dbReference>
<dbReference type="GO" id="GO:0005737">
    <property type="term" value="C:cytoplasm"/>
    <property type="evidence" value="ECO:0007669"/>
    <property type="project" value="UniProtKB-SubCell"/>
</dbReference>
<dbReference type="GO" id="GO:0004177">
    <property type="term" value="F:aminopeptidase activity"/>
    <property type="evidence" value="ECO:0007669"/>
    <property type="project" value="UniProtKB-KW"/>
</dbReference>
<dbReference type="GO" id="GO:0008239">
    <property type="term" value="F:dipeptidyl-peptidase activity"/>
    <property type="evidence" value="ECO:0007669"/>
    <property type="project" value="UniProtKB-UniRule"/>
</dbReference>
<dbReference type="GO" id="GO:0008236">
    <property type="term" value="F:serine-type peptidase activity"/>
    <property type="evidence" value="ECO:0007669"/>
    <property type="project" value="UniProtKB-KW"/>
</dbReference>
<dbReference type="GO" id="GO:0006508">
    <property type="term" value="P:proteolysis"/>
    <property type="evidence" value="ECO:0007669"/>
    <property type="project" value="UniProtKB-KW"/>
</dbReference>
<dbReference type="Gene3D" id="1.10.246.70">
    <property type="match status" value="1"/>
</dbReference>
<dbReference type="Gene3D" id="3.40.50.1820">
    <property type="entry name" value="alpha/beta hydrolase"/>
    <property type="match status" value="1"/>
</dbReference>
<dbReference type="Gene3D" id="2.60.120.260">
    <property type="entry name" value="Galactose-binding domain-like"/>
    <property type="match status" value="1"/>
</dbReference>
<dbReference type="HAMAP" id="MF_00698">
    <property type="entry name" value="Aminopeptidase_S15"/>
    <property type="match status" value="1"/>
</dbReference>
<dbReference type="InterPro" id="IPR029058">
    <property type="entry name" value="AB_hydrolase_fold"/>
</dbReference>
<dbReference type="InterPro" id="IPR008979">
    <property type="entry name" value="Galactose-bd-like_sf"/>
</dbReference>
<dbReference type="InterPro" id="IPR008252">
    <property type="entry name" value="Pept_S15_Xpro"/>
</dbReference>
<dbReference type="InterPro" id="IPR015251">
    <property type="entry name" value="PepX_N_dom"/>
</dbReference>
<dbReference type="InterPro" id="IPR036313">
    <property type="entry name" value="PepX_N_dom_sf"/>
</dbReference>
<dbReference type="InterPro" id="IPR000383">
    <property type="entry name" value="Xaa-Pro-like_dom"/>
</dbReference>
<dbReference type="InterPro" id="IPR013736">
    <property type="entry name" value="Xaa-Pro_dipept_C"/>
</dbReference>
<dbReference type="InterPro" id="IPR050585">
    <property type="entry name" value="Xaa-Pro_dipeptidyl-ppase/CocE"/>
</dbReference>
<dbReference type="NCBIfam" id="NF003783">
    <property type="entry name" value="PRK05371.1-4"/>
    <property type="match status" value="1"/>
</dbReference>
<dbReference type="PANTHER" id="PTHR43056:SF10">
    <property type="entry name" value="COCE_NOND FAMILY, PUTATIVE (AFU_ORTHOLOGUE AFUA_7G00600)-RELATED"/>
    <property type="match status" value="1"/>
</dbReference>
<dbReference type="PANTHER" id="PTHR43056">
    <property type="entry name" value="PEPTIDASE S9 PROLYL OLIGOPEPTIDASE"/>
    <property type="match status" value="1"/>
</dbReference>
<dbReference type="Pfam" id="PF02129">
    <property type="entry name" value="Peptidase_S15"/>
    <property type="match status" value="1"/>
</dbReference>
<dbReference type="Pfam" id="PF08530">
    <property type="entry name" value="PepX_C"/>
    <property type="match status" value="1"/>
</dbReference>
<dbReference type="Pfam" id="PF09168">
    <property type="entry name" value="PepX_N"/>
    <property type="match status" value="1"/>
</dbReference>
<dbReference type="PRINTS" id="PR00923">
    <property type="entry name" value="LACTOPTASE"/>
</dbReference>
<dbReference type="SMART" id="SM00939">
    <property type="entry name" value="PepX_C"/>
    <property type="match status" value="1"/>
</dbReference>
<dbReference type="SMART" id="SM00940">
    <property type="entry name" value="PepX_N"/>
    <property type="match status" value="1"/>
</dbReference>
<dbReference type="SUPFAM" id="SSF53474">
    <property type="entry name" value="alpha/beta-Hydrolases"/>
    <property type="match status" value="1"/>
</dbReference>
<dbReference type="SUPFAM" id="SSF49785">
    <property type="entry name" value="Galactose-binding domain-like"/>
    <property type="match status" value="1"/>
</dbReference>
<dbReference type="SUPFAM" id="SSF81761">
    <property type="entry name" value="X-Prolyl dipeptidyl aminopeptidase PepX, N-terminal domain"/>
    <property type="match status" value="1"/>
</dbReference>
<accession>B5XI61</accession>